<evidence type="ECO:0000255" key="1">
    <source>
        <dbReference type="HAMAP-Rule" id="MF_01227"/>
    </source>
</evidence>
<accession>B7LEK0</accession>
<protein>
    <recommendedName>
        <fullName evidence="1">CTP synthase</fullName>
        <ecNumber evidence="1">6.3.4.2</ecNumber>
    </recommendedName>
    <alternativeName>
        <fullName evidence="1">Cytidine 5'-triphosphate synthase</fullName>
    </alternativeName>
    <alternativeName>
        <fullName evidence="1">Cytidine triphosphate synthetase</fullName>
        <shortName evidence="1">CTP synthetase</shortName>
        <shortName evidence="1">CTPS</shortName>
    </alternativeName>
    <alternativeName>
        <fullName evidence="1">UTP--ammonia ligase</fullName>
    </alternativeName>
</protein>
<gene>
    <name evidence="1" type="primary">pyrG</name>
    <name type="ordered locus">EC55989_3055</name>
</gene>
<keyword id="KW-0067">ATP-binding</keyword>
<keyword id="KW-0315">Glutamine amidotransferase</keyword>
<keyword id="KW-0436">Ligase</keyword>
<keyword id="KW-0460">Magnesium</keyword>
<keyword id="KW-0479">Metal-binding</keyword>
<keyword id="KW-0547">Nucleotide-binding</keyword>
<keyword id="KW-0665">Pyrimidine biosynthesis</keyword>
<keyword id="KW-1185">Reference proteome</keyword>
<name>PYRG_ECO55</name>
<proteinExistence type="inferred from homology"/>
<sequence length="545" mass="60374">MTTNYIFVTGGVVSSLGKGIAAASLAAILEARGLNVTIMKLDPYINVDPGTMSPIQHGEVFVTEDGAETDLDLGHYERFIRTKMSRRNNFTTGRIYSDVLRKERRGDYLGATVQVIPHITNAIKERVLEGGEGHDVVLVEIGGTVGDIESLPFLEAIRQMAVEIGREHTLFMHLTLVPYMAASGEVKTKPTQHSVKELLSIGIQPDILICRSDRAVPANERAKIALFCNVPEKAVISLKDVDSIYKIPGLLKSQGLDDYICKRFSLNCPEANLSEWEQVIFEEANPVSEVTIGMVGKYIELPDAYKSVIEALKHGGLKNRVSVNIKLIDSQDVETRGVEILKGLDAILVPGGFGYRGVEGMITTARFARENNIPYLGICLGMQVALIDYARHVANMENANSTEFVPDCKYPVVALITEWRDENGNVEVRSEKSDLGGTMRLGAQQCQLVDDSLVRQLYNAPTIVERHRHRYEVNNMLLKQIEDAGLRVAGRSGDDQLVEIIEVPNHPWFVACQFHPEFTSTPRDGHPLFAGFVKAASEFQKRQAK</sequence>
<reference key="1">
    <citation type="journal article" date="2009" name="PLoS Genet.">
        <title>Organised genome dynamics in the Escherichia coli species results in highly diverse adaptive paths.</title>
        <authorList>
            <person name="Touchon M."/>
            <person name="Hoede C."/>
            <person name="Tenaillon O."/>
            <person name="Barbe V."/>
            <person name="Baeriswyl S."/>
            <person name="Bidet P."/>
            <person name="Bingen E."/>
            <person name="Bonacorsi S."/>
            <person name="Bouchier C."/>
            <person name="Bouvet O."/>
            <person name="Calteau A."/>
            <person name="Chiapello H."/>
            <person name="Clermont O."/>
            <person name="Cruveiller S."/>
            <person name="Danchin A."/>
            <person name="Diard M."/>
            <person name="Dossat C."/>
            <person name="Karoui M.E."/>
            <person name="Frapy E."/>
            <person name="Garry L."/>
            <person name="Ghigo J.M."/>
            <person name="Gilles A.M."/>
            <person name="Johnson J."/>
            <person name="Le Bouguenec C."/>
            <person name="Lescat M."/>
            <person name="Mangenot S."/>
            <person name="Martinez-Jehanne V."/>
            <person name="Matic I."/>
            <person name="Nassif X."/>
            <person name="Oztas S."/>
            <person name="Petit M.A."/>
            <person name="Pichon C."/>
            <person name="Rouy Z."/>
            <person name="Ruf C.S."/>
            <person name="Schneider D."/>
            <person name="Tourret J."/>
            <person name="Vacherie B."/>
            <person name="Vallenet D."/>
            <person name="Medigue C."/>
            <person name="Rocha E.P.C."/>
            <person name="Denamur E."/>
        </authorList>
    </citation>
    <scope>NUCLEOTIDE SEQUENCE [LARGE SCALE GENOMIC DNA]</scope>
    <source>
        <strain>55989 / EAEC</strain>
    </source>
</reference>
<comment type="function">
    <text evidence="1">Catalyzes the ATP-dependent amination of UTP to CTP with either L-glutamine or ammonia as the source of nitrogen. Regulates intracellular CTP levels through interactions with the four ribonucleotide triphosphates.</text>
</comment>
<comment type="catalytic activity">
    <reaction evidence="1">
        <text>UTP + L-glutamine + ATP + H2O = CTP + L-glutamate + ADP + phosphate + 2 H(+)</text>
        <dbReference type="Rhea" id="RHEA:26426"/>
        <dbReference type="ChEBI" id="CHEBI:15377"/>
        <dbReference type="ChEBI" id="CHEBI:15378"/>
        <dbReference type="ChEBI" id="CHEBI:29985"/>
        <dbReference type="ChEBI" id="CHEBI:30616"/>
        <dbReference type="ChEBI" id="CHEBI:37563"/>
        <dbReference type="ChEBI" id="CHEBI:43474"/>
        <dbReference type="ChEBI" id="CHEBI:46398"/>
        <dbReference type="ChEBI" id="CHEBI:58359"/>
        <dbReference type="ChEBI" id="CHEBI:456216"/>
        <dbReference type="EC" id="6.3.4.2"/>
    </reaction>
</comment>
<comment type="catalytic activity">
    <reaction evidence="1">
        <text>L-glutamine + H2O = L-glutamate + NH4(+)</text>
        <dbReference type="Rhea" id="RHEA:15889"/>
        <dbReference type="ChEBI" id="CHEBI:15377"/>
        <dbReference type="ChEBI" id="CHEBI:28938"/>
        <dbReference type="ChEBI" id="CHEBI:29985"/>
        <dbReference type="ChEBI" id="CHEBI:58359"/>
    </reaction>
</comment>
<comment type="catalytic activity">
    <reaction evidence="1">
        <text>UTP + NH4(+) + ATP = CTP + ADP + phosphate + 2 H(+)</text>
        <dbReference type="Rhea" id="RHEA:16597"/>
        <dbReference type="ChEBI" id="CHEBI:15378"/>
        <dbReference type="ChEBI" id="CHEBI:28938"/>
        <dbReference type="ChEBI" id="CHEBI:30616"/>
        <dbReference type="ChEBI" id="CHEBI:37563"/>
        <dbReference type="ChEBI" id="CHEBI:43474"/>
        <dbReference type="ChEBI" id="CHEBI:46398"/>
        <dbReference type="ChEBI" id="CHEBI:456216"/>
    </reaction>
</comment>
<comment type="activity regulation">
    <text evidence="1">Allosterically activated by GTP, when glutamine is the substrate; GTP has no effect on the reaction when ammonia is the substrate. The allosteric effector GTP functions by stabilizing the protein conformation that binds the tetrahedral intermediate(s) formed during glutamine hydrolysis. Inhibited by the product CTP, via allosteric rather than competitive inhibition.</text>
</comment>
<comment type="pathway">
    <text evidence="1">Pyrimidine metabolism; CTP biosynthesis via de novo pathway; CTP from UDP: step 2/2.</text>
</comment>
<comment type="subunit">
    <text evidence="1">Homotetramer.</text>
</comment>
<comment type="miscellaneous">
    <text evidence="1">CTPSs have evolved a hybrid strategy for distinguishing between UTP and CTP. The overlapping regions of the product feedback inhibitory and substrate sites recognize a common feature in both compounds, the triphosphate moiety. To differentiate isosteric substrate and product pyrimidine rings, an additional pocket far from the expected kinase/ligase catalytic site, specifically recognizes the cytosine and ribose portions of the product inhibitor.</text>
</comment>
<comment type="similarity">
    <text evidence="1">Belongs to the CTP synthase family.</text>
</comment>
<organism>
    <name type="scientific">Escherichia coli (strain 55989 / EAEC)</name>
    <dbReference type="NCBI Taxonomy" id="585055"/>
    <lineage>
        <taxon>Bacteria</taxon>
        <taxon>Pseudomonadati</taxon>
        <taxon>Pseudomonadota</taxon>
        <taxon>Gammaproteobacteria</taxon>
        <taxon>Enterobacterales</taxon>
        <taxon>Enterobacteriaceae</taxon>
        <taxon>Escherichia</taxon>
    </lineage>
</organism>
<dbReference type="EC" id="6.3.4.2" evidence="1"/>
<dbReference type="EMBL" id="CU928145">
    <property type="protein sequence ID" value="CAU98936.1"/>
    <property type="molecule type" value="Genomic_DNA"/>
</dbReference>
<dbReference type="RefSeq" id="WP_000210878.1">
    <property type="nucleotide sequence ID" value="NZ_CP028304.1"/>
</dbReference>
<dbReference type="SMR" id="B7LEK0"/>
<dbReference type="MEROPS" id="C26.964"/>
<dbReference type="GeneID" id="93779218"/>
<dbReference type="KEGG" id="eck:EC55989_3055"/>
<dbReference type="HOGENOM" id="CLU_011675_5_0_6"/>
<dbReference type="UniPathway" id="UPA00159">
    <property type="reaction ID" value="UER00277"/>
</dbReference>
<dbReference type="Proteomes" id="UP000000746">
    <property type="component" value="Chromosome"/>
</dbReference>
<dbReference type="GO" id="GO:0005829">
    <property type="term" value="C:cytosol"/>
    <property type="evidence" value="ECO:0007669"/>
    <property type="project" value="TreeGrafter"/>
</dbReference>
<dbReference type="GO" id="GO:0005524">
    <property type="term" value="F:ATP binding"/>
    <property type="evidence" value="ECO:0007669"/>
    <property type="project" value="UniProtKB-KW"/>
</dbReference>
<dbReference type="GO" id="GO:0003883">
    <property type="term" value="F:CTP synthase activity"/>
    <property type="evidence" value="ECO:0007669"/>
    <property type="project" value="UniProtKB-UniRule"/>
</dbReference>
<dbReference type="GO" id="GO:0004359">
    <property type="term" value="F:glutaminase activity"/>
    <property type="evidence" value="ECO:0007669"/>
    <property type="project" value="RHEA"/>
</dbReference>
<dbReference type="GO" id="GO:0042802">
    <property type="term" value="F:identical protein binding"/>
    <property type="evidence" value="ECO:0007669"/>
    <property type="project" value="TreeGrafter"/>
</dbReference>
<dbReference type="GO" id="GO:0046872">
    <property type="term" value="F:metal ion binding"/>
    <property type="evidence" value="ECO:0007669"/>
    <property type="project" value="UniProtKB-KW"/>
</dbReference>
<dbReference type="GO" id="GO:0044210">
    <property type="term" value="P:'de novo' CTP biosynthetic process"/>
    <property type="evidence" value="ECO:0007669"/>
    <property type="project" value="UniProtKB-UniRule"/>
</dbReference>
<dbReference type="GO" id="GO:0019856">
    <property type="term" value="P:pyrimidine nucleobase biosynthetic process"/>
    <property type="evidence" value="ECO:0007669"/>
    <property type="project" value="TreeGrafter"/>
</dbReference>
<dbReference type="CDD" id="cd03113">
    <property type="entry name" value="CTPS_N"/>
    <property type="match status" value="1"/>
</dbReference>
<dbReference type="CDD" id="cd01746">
    <property type="entry name" value="GATase1_CTP_Synthase"/>
    <property type="match status" value="1"/>
</dbReference>
<dbReference type="FunFam" id="3.40.50.300:FF:000009">
    <property type="entry name" value="CTP synthase"/>
    <property type="match status" value="1"/>
</dbReference>
<dbReference type="FunFam" id="3.40.50.880:FF:000002">
    <property type="entry name" value="CTP synthase"/>
    <property type="match status" value="1"/>
</dbReference>
<dbReference type="Gene3D" id="3.40.50.880">
    <property type="match status" value="1"/>
</dbReference>
<dbReference type="Gene3D" id="3.40.50.300">
    <property type="entry name" value="P-loop containing nucleotide triphosphate hydrolases"/>
    <property type="match status" value="1"/>
</dbReference>
<dbReference type="HAMAP" id="MF_01227">
    <property type="entry name" value="PyrG"/>
    <property type="match status" value="1"/>
</dbReference>
<dbReference type="InterPro" id="IPR029062">
    <property type="entry name" value="Class_I_gatase-like"/>
</dbReference>
<dbReference type="InterPro" id="IPR004468">
    <property type="entry name" value="CTP_synthase"/>
</dbReference>
<dbReference type="InterPro" id="IPR017456">
    <property type="entry name" value="CTP_synthase_N"/>
</dbReference>
<dbReference type="InterPro" id="IPR017926">
    <property type="entry name" value="GATASE"/>
</dbReference>
<dbReference type="InterPro" id="IPR033828">
    <property type="entry name" value="GATase1_CTP_Synthase"/>
</dbReference>
<dbReference type="InterPro" id="IPR027417">
    <property type="entry name" value="P-loop_NTPase"/>
</dbReference>
<dbReference type="NCBIfam" id="NF003792">
    <property type="entry name" value="PRK05380.1"/>
    <property type="match status" value="1"/>
</dbReference>
<dbReference type="NCBIfam" id="TIGR00337">
    <property type="entry name" value="PyrG"/>
    <property type="match status" value="1"/>
</dbReference>
<dbReference type="PANTHER" id="PTHR11550">
    <property type="entry name" value="CTP SYNTHASE"/>
    <property type="match status" value="1"/>
</dbReference>
<dbReference type="PANTHER" id="PTHR11550:SF0">
    <property type="entry name" value="CTP SYNTHASE-RELATED"/>
    <property type="match status" value="1"/>
</dbReference>
<dbReference type="Pfam" id="PF06418">
    <property type="entry name" value="CTP_synth_N"/>
    <property type="match status" value="1"/>
</dbReference>
<dbReference type="Pfam" id="PF00117">
    <property type="entry name" value="GATase"/>
    <property type="match status" value="1"/>
</dbReference>
<dbReference type="SUPFAM" id="SSF52317">
    <property type="entry name" value="Class I glutamine amidotransferase-like"/>
    <property type="match status" value="1"/>
</dbReference>
<dbReference type="SUPFAM" id="SSF52540">
    <property type="entry name" value="P-loop containing nucleoside triphosphate hydrolases"/>
    <property type="match status" value="1"/>
</dbReference>
<dbReference type="PROSITE" id="PS51273">
    <property type="entry name" value="GATASE_TYPE_1"/>
    <property type="match status" value="1"/>
</dbReference>
<feature type="chain" id="PRO_1000164943" description="CTP synthase">
    <location>
        <begin position="1"/>
        <end position="545"/>
    </location>
</feature>
<feature type="domain" description="Glutamine amidotransferase type-1" evidence="1">
    <location>
        <begin position="291"/>
        <end position="542"/>
    </location>
</feature>
<feature type="region of interest" description="Amidoligase domain" evidence="1">
    <location>
        <begin position="1"/>
        <end position="266"/>
    </location>
</feature>
<feature type="active site" description="Nucleophile; for glutamine hydrolysis" evidence="1">
    <location>
        <position position="379"/>
    </location>
</feature>
<feature type="active site" evidence="1">
    <location>
        <position position="515"/>
    </location>
</feature>
<feature type="active site" evidence="1">
    <location>
        <position position="517"/>
    </location>
</feature>
<feature type="binding site" evidence="1">
    <location>
        <position position="14"/>
    </location>
    <ligand>
        <name>CTP</name>
        <dbReference type="ChEBI" id="CHEBI:37563"/>
        <note>allosteric inhibitor</note>
    </ligand>
</feature>
<feature type="binding site" evidence="1">
    <location>
        <position position="14"/>
    </location>
    <ligand>
        <name>UTP</name>
        <dbReference type="ChEBI" id="CHEBI:46398"/>
    </ligand>
</feature>
<feature type="binding site" evidence="1">
    <location>
        <begin position="15"/>
        <end position="20"/>
    </location>
    <ligand>
        <name>ATP</name>
        <dbReference type="ChEBI" id="CHEBI:30616"/>
    </ligand>
</feature>
<feature type="binding site" evidence="1">
    <location>
        <position position="72"/>
    </location>
    <ligand>
        <name>ATP</name>
        <dbReference type="ChEBI" id="CHEBI:30616"/>
    </ligand>
</feature>
<feature type="binding site" evidence="1">
    <location>
        <position position="72"/>
    </location>
    <ligand>
        <name>Mg(2+)</name>
        <dbReference type="ChEBI" id="CHEBI:18420"/>
    </ligand>
</feature>
<feature type="binding site" evidence="1">
    <location>
        <position position="140"/>
    </location>
    <ligand>
        <name>Mg(2+)</name>
        <dbReference type="ChEBI" id="CHEBI:18420"/>
    </ligand>
</feature>
<feature type="binding site" evidence="1">
    <location>
        <begin position="147"/>
        <end position="149"/>
    </location>
    <ligand>
        <name>CTP</name>
        <dbReference type="ChEBI" id="CHEBI:37563"/>
        <note>allosteric inhibitor</note>
    </ligand>
</feature>
<feature type="binding site" evidence="1">
    <location>
        <begin position="187"/>
        <end position="192"/>
    </location>
    <ligand>
        <name>CTP</name>
        <dbReference type="ChEBI" id="CHEBI:37563"/>
        <note>allosteric inhibitor</note>
    </ligand>
</feature>
<feature type="binding site" evidence="1">
    <location>
        <begin position="187"/>
        <end position="192"/>
    </location>
    <ligand>
        <name>UTP</name>
        <dbReference type="ChEBI" id="CHEBI:46398"/>
    </ligand>
</feature>
<feature type="binding site" evidence="1">
    <location>
        <position position="223"/>
    </location>
    <ligand>
        <name>CTP</name>
        <dbReference type="ChEBI" id="CHEBI:37563"/>
        <note>allosteric inhibitor</note>
    </ligand>
</feature>
<feature type="binding site" evidence="1">
    <location>
        <position position="223"/>
    </location>
    <ligand>
        <name>UTP</name>
        <dbReference type="ChEBI" id="CHEBI:46398"/>
    </ligand>
</feature>
<feature type="binding site" evidence="1">
    <location>
        <begin position="239"/>
        <end position="241"/>
    </location>
    <ligand>
        <name>ATP</name>
        <dbReference type="ChEBI" id="CHEBI:30616"/>
    </ligand>
</feature>
<feature type="binding site" evidence="1">
    <location>
        <position position="352"/>
    </location>
    <ligand>
        <name>L-glutamine</name>
        <dbReference type="ChEBI" id="CHEBI:58359"/>
    </ligand>
</feature>
<feature type="binding site" evidence="1">
    <location>
        <begin position="380"/>
        <end position="383"/>
    </location>
    <ligand>
        <name>L-glutamine</name>
        <dbReference type="ChEBI" id="CHEBI:58359"/>
    </ligand>
</feature>
<feature type="binding site" evidence="1">
    <location>
        <position position="403"/>
    </location>
    <ligand>
        <name>L-glutamine</name>
        <dbReference type="ChEBI" id="CHEBI:58359"/>
    </ligand>
</feature>
<feature type="binding site" evidence="1">
    <location>
        <position position="470"/>
    </location>
    <ligand>
        <name>L-glutamine</name>
        <dbReference type="ChEBI" id="CHEBI:58359"/>
    </ligand>
</feature>